<reference key="1">
    <citation type="journal article" date="2005" name="Arch. Microbiol.">
        <title>The genome sequence of an anaerobic aromatic-degrading denitrifying bacterium, strain EbN1.</title>
        <authorList>
            <person name="Rabus R."/>
            <person name="Kube M."/>
            <person name="Heider J."/>
            <person name="Beck A."/>
            <person name="Heitmann K."/>
            <person name="Widdel F."/>
            <person name="Reinhardt R."/>
        </authorList>
    </citation>
    <scope>NUCLEOTIDE SEQUENCE [LARGE SCALE GENOMIC DNA]</scope>
    <source>
        <strain>DSM 19018 / LMG 30748 / EbN1</strain>
    </source>
</reference>
<protein>
    <recommendedName>
        <fullName evidence="1">Phenylalanine--tRNA ligase alpha subunit</fullName>
        <ecNumber evidence="1">6.1.1.20</ecNumber>
    </recommendedName>
    <alternativeName>
        <fullName evidence="1">Phenylalanyl-tRNA synthetase alpha subunit</fullName>
        <shortName evidence="1">PheRS</shortName>
    </alternativeName>
</protein>
<name>SYFA_AROAE</name>
<organism>
    <name type="scientific">Aromatoleum aromaticum (strain DSM 19018 / LMG 30748 / EbN1)</name>
    <name type="common">Azoarcus sp. (strain EbN1)</name>
    <dbReference type="NCBI Taxonomy" id="76114"/>
    <lineage>
        <taxon>Bacteria</taxon>
        <taxon>Pseudomonadati</taxon>
        <taxon>Pseudomonadota</taxon>
        <taxon>Betaproteobacteria</taxon>
        <taxon>Rhodocyclales</taxon>
        <taxon>Rhodocyclaceae</taxon>
        <taxon>Aromatoleum</taxon>
    </lineage>
</organism>
<feature type="chain" id="PRO_0000231961" description="Phenylalanine--tRNA ligase alpha subunit">
    <location>
        <begin position="1"/>
        <end position="343"/>
    </location>
</feature>
<feature type="binding site" evidence="1">
    <location>
        <position position="264"/>
    </location>
    <ligand>
        <name>Mg(2+)</name>
        <dbReference type="ChEBI" id="CHEBI:18420"/>
        <note>shared with beta subunit</note>
    </ligand>
</feature>
<sequence length="343" mass="38199">MDKLDQLVQQAAAEFAAAADGVQLEQAKARYLGKTGALTERLKGLGKLAAEERRVAGAEINRAKDAIEAALEARRQALREAVLVAQLAAEALDVTLPGRGAAQGGLHPVSRTLERIEALFRSIGFVVADGPEVETDWHNFTALNTPENHPARSMHDTFYLEGHEDVLLRTHTSPVQIRTMLDHVARYGDRESMPEIRVIVPGRVYRVDSDATHSPMFHQVEGLWVGESVSFADLKGVIADFLRKFFETEELQVRFRPSFFPFTEPSAEIDVAFMSGALKGRWLEIAGCGMVHPNVLRFGGIDPERYTGFAFGMGPDRLTMLRYGVNDLRLFFEGDLRFLSQFR</sequence>
<evidence type="ECO:0000255" key="1">
    <source>
        <dbReference type="HAMAP-Rule" id="MF_00281"/>
    </source>
</evidence>
<dbReference type="EC" id="6.1.1.20" evidence="1"/>
<dbReference type="EMBL" id="CR555306">
    <property type="protein sequence ID" value="CAI06582.1"/>
    <property type="molecule type" value="Genomic_DNA"/>
</dbReference>
<dbReference type="RefSeq" id="WP_011236313.1">
    <property type="nucleotide sequence ID" value="NC_006513.1"/>
</dbReference>
<dbReference type="SMR" id="Q5P7X9"/>
<dbReference type="STRING" id="76114.ebA868"/>
<dbReference type="KEGG" id="eba:ebA868"/>
<dbReference type="eggNOG" id="COG0016">
    <property type="taxonomic scope" value="Bacteria"/>
</dbReference>
<dbReference type="HOGENOM" id="CLU_025086_0_1_4"/>
<dbReference type="OrthoDB" id="9800719at2"/>
<dbReference type="Proteomes" id="UP000006552">
    <property type="component" value="Chromosome"/>
</dbReference>
<dbReference type="GO" id="GO:0005737">
    <property type="term" value="C:cytoplasm"/>
    <property type="evidence" value="ECO:0007669"/>
    <property type="project" value="UniProtKB-SubCell"/>
</dbReference>
<dbReference type="GO" id="GO:0005524">
    <property type="term" value="F:ATP binding"/>
    <property type="evidence" value="ECO:0007669"/>
    <property type="project" value="UniProtKB-UniRule"/>
</dbReference>
<dbReference type="GO" id="GO:0000287">
    <property type="term" value="F:magnesium ion binding"/>
    <property type="evidence" value="ECO:0007669"/>
    <property type="project" value="UniProtKB-UniRule"/>
</dbReference>
<dbReference type="GO" id="GO:0004826">
    <property type="term" value="F:phenylalanine-tRNA ligase activity"/>
    <property type="evidence" value="ECO:0007669"/>
    <property type="project" value="UniProtKB-UniRule"/>
</dbReference>
<dbReference type="GO" id="GO:0000049">
    <property type="term" value="F:tRNA binding"/>
    <property type="evidence" value="ECO:0007669"/>
    <property type="project" value="InterPro"/>
</dbReference>
<dbReference type="GO" id="GO:0006432">
    <property type="term" value="P:phenylalanyl-tRNA aminoacylation"/>
    <property type="evidence" value="ECO:0007669"/>
    <property type="project" value="UniProtKB-UniRule"/>
</dbReference>
<dbReference type="CDD" id="cd00496">
    <property type="entry name" value="PheRS_alpha_core"/>
    <property type="match status" value="1"/>
</dbReference>
<dbReference type="FunFam" id="3.30.930.10:FF:000003">
    <property type="entry name" value="Phenylalanine--tRNA ligase alpha subunit"/>
    <property type="match status" value="1"/>
</dbReference>
<dbReference type="Gene3D" id="3.30.930.10">
    <property type="entry name" value="Bira Bifunctional Protein, Domain 2"/>
    <property type="match status" value="1"/>
</dbReference>
<dbReference type="HAMAP" id="MF_00281">
    <property type="entry name" value="Phe_tRNA_synth_alpha1"/>
    <property type="match status" value="1"/>
</dbReference>
<dbReference type="InterPro" id="IPR006195">
    <property type="entry name" value="aa-tRNA-synth_II"/>
</dbReference>
<dbReference type="InterPro" id="IPR045864">
    <property type="entry name" value="aa-tRNA-synth_II/BPL/LPL"/>
</dbReference>
<dbReference type="InterPro" id="IPR004529">
    <property type="entry name" value="Phe-tRNA-synth_IIc_asu"/>
</dbReference>
<dbReference type="InterPro" id="IPR004188">
    <property type="entry name" value="Phe-tRNA_ligase_II_N"/>
</dbReference>
<dbReference type="InterPro" id="IPR022911">
    <property type="entry name" value="Phe_tRNA_ligase_alpha1_bac"/>
</dbReference>
<dbReference type="InterPro" id="IPR002319">
    <property type="entry name" value="Phenylalanyl-tRNA_Synthase"/>
</dbReference>
<dbReference type="InterPro" id="IPR010978">
    <property type="entry name" value="tRNA-bd_arm"/>
</dbReference>
<dbReference type="NCBIfam" id="TIGR00468">
    <property type="entry name" value="pheS"/>
    <property type="match status" value="1"/>
</dbReference>
<dbReference type="PANTHER" id="PTHR11538:SF41">
    <property type="entry name" value="PHENYLALANINE--TRNA LIGASE, MITOCHONDRIAL"/>
    <property type="match status" value="1"/>
</dbReference>
<dbReference type="PANTHER" id="PTHR11538">
    <property type="entry name" value="PHENYLALANYL-TRNA SYNTHETASE"/>
    <property type="match status" value="1"/>
</dbReference>
<dbReference type="Pfam" id="PF02912">
    <property type="entry name" value="Phe_tRNA-synt_N"/>
    <property type="match status" value="1"/>
</dbReference>
<dbReference type="Pfam" id="PF01409">
    <property type="entry name" value="tRNA-synt_2d"/>
    <property type="match status" value="1"/>
</dbReference>
<dbReference type="SUPFAM" id="SSF55681">
    <property type="entry name" value="Class II aaRS and biotin synthetases"/>
    <property type="match status" value="1"/>
</dbReference>
<dbReference type="SUPFAM" id="SSF46589">
    <property type="entry name" value="tRNA-binding arm"/>
    <property type="match status" value="1"/>
</dbReference>
<dbReference type="PROSITE" id="PS50862">
    <property type="entry name" value="AA_TRNA_LIGASE_II"/>
    <property type="match status" value="1"/>
</dbReference>
<keyword id="KW-0030">Aminoacyl-tRNA synthetase</keyword>
<keyword id="KW-0067">ATP-binding</keyword>
<keyword id="KW-0963">Cytoplasm</keyword>
<keyword id="KW-0436">Ligase</keyword>
<keyword id="KW-0460">Magnesium</keyword>
<keyword id="KW-0479">Metal-binding</keyword>
<keyword id="KW-0547">Nucleotide-binding</keyword>
<keyword id="KW-0648">Protein biosynthesis</keyword>
<keyword id="KW-1185">Reference proteome</keyword>
<proteinExistence type="inferred from homology"/>
<gene>
    <name evidence="1" type="primary">pheS</name>
    <name type="ordered locus">AZOSEA04600</name>
    <name type="ORF">ebA868</name>
</gene>
<accession>Q5P7X9</accession>
<comment type="catalytic activity">
    <reaction evidence="1">
        <text>tRNA(Phe) + L-phenylalanine + ATP = L-phenylalanyl-tRNA(Phe) + AMP + diphosphate + H(+)</text>
        <dbReference type="Rhea" id="RHEA:19413"/>
        <dbReference type="Rhea" id="RHEA-COMP:9668"/>
        <dbReference type="Rhea" id="RHEA-COMP:9699"/>
        <dbReference type="ChEBI" id="CHEBI:15378"/>
        <dbReference type="ChEBI" id="CHEBI:30616"/>
        <dbReference type="ChEBI" id="CHEBI:33019"/>
        <dbReference type="ChEBI" id="CHEBI:58095"/>
        <dbReference type="ChEBI" id="CHEBI:78442"/>
        <dbReference type="ChEBI" id="CHEBI:78531"/>
        <dbReference type="ChEBI" id="CHEBI:456215"/>
        <dbReference type="EC" id="6.1.1.20"/>
    </reaction>
</comment>
<comment type="cofactor">
    <cofactor evidence="1">
        <name>Mg(2+)</name>
        <dbReference type="ChEBI" id="CHEBI:18420"/>
    </cofactor>
    <text evidence="1">Binds 2 magnesium ions per tetramer.</text>
</comment>
<comment type="subunit">
    <text evidence="1">Tetramer of two alpha and two beta subunits.</text>
</comment>
<comment type="subcellular location">
    <subcellularLocation>
        <location evidence="1">Cytoplasm</location>
    </subcellularLocation>
</comment>
<comment type="similarity">
    <text evidence="1">Belongs to the class-II aminoacyl-tRNA synthetase family. Phe-tRNA synthetase alpha subunit type 1 subfamily.</text>
</comment>